<reference key="1">
    <citation type="journal article" date="2001" name="Nature">
        <title>Complete genome sequence of a multiple drug resistant Salmonella enterica serovar Typhi CT18.</title>
        <authorList>
            <person name="Parkhill J."/>
            <person name="Dougan G."/>
            <person name="James K.D."/>
            <person name="Thomson N.R."/>
            <person name="Pickard D."/>
            <person name="Wain J."/>
            <person name="Churcher C.M."/>
            <person name="Mungall K.L."/>
            <person name="Bentley S.D."/>
            <person name="Holden M.T.G."/>
            <person name="Sebaihia M."/>
            <person name="Baker S."/>
            <person name="Basham D."/>
            <person name="Brooks K."/>
            <person name="Chillingworth T."/>
            <person name="Connerton P."/>
            <person name="Cronin A."/>
            <person name="Davis P."/>
            <person name="Davies R.M."/>
            <person name="Dowd L."/>
            <person name="White N."/>
            <person name="Farrar J."/>
            <person name="Feltwell T."/>
            <person name="Hamlin N."/>
            <person name="Haque A."/>
            <person name="Hien T.T."/>
            <person name="Holroyd S."/>
            <person name="Jagels K."/>
            <person name="Krogh A."/>
            <person name="Larsen T.S."/>
            <person name="Leather S."/>
            <person name="Moule S."/>
            <person name="O'Gaora P."/>
            <person name="Parry C."/>
            <person name="Quail M.A."/>
            <person name="Rutherford K.M."/>
            <person name="Simmonds M."/>
            <person name="Skelton J."/>
            <person name="Stevens K."/>
            <person name="Whitehead S."/>
            <person name="Barrell B.G."/>
        </authorList>
    </citation>
    <scope>NUCLEOTIDE SEQUENCE [LARGE SCALE GENOMIC DNA]</scope>
    <source>
        <strain>CT18</strain>
    </source>
</reference>
<reference key="2">
    <citation type="journal article" date="2003" name="J. Bacteriol.">
        <title>Comparative genomics of Salmonella enterica serovar Typhi strains Ty2 and CT18.</title>
        <authorList>
            <person name="Deng W."/>
            <person name="Liou S.-R."/>
            <person name="Plunkett G. III"/>
            <person name="Mayhew G.F."/>
            <person name="Rose D.J."/>
            <person name="Burland V."/>
            <person name="Kodoyianni V."/>
            <person name="Schwartz D.C."/>
            <person name="Blattner F.R."/>
        </authorList>
    </citation>
    <scope>NUCLEOTIDE SEQUENCE [LARGE SCALE GENOMIC DNA]</scope>
    <source>
        <strain>ATCC 700931 / Ty2</strain>
    </source>
</reference>
<protein>
    <recommendedName>
        <fullName evidence="2">Exoribonuclease 2</fullName>
        <ecNumber evidence="2">3.1.13.1</ecNumber>
    </recommendedName>
    <alternativeName>
        <fullName evidence="2">Exoribonuclease II</fullName>
        <shortName evidence="2">RNase II</shortName>
        <shortName evidence="2">Ribonuclease II</shortName>
    </alternativeName>
</protein>
<name>RNB_SALTI</name>
<gene>
    <name evidence="2" type="primary">rnb</name>
    <name type="ordered locus">STY1350</name>
    <name type="ordered locus">t1615</name>
</gene>
<sequence>MFQDNPLLAQLKQQLHSQTPRAEGVVKATEKGFGFLEVDAQKSYFIPPPQMKKVMHGDRIVAVIHTEKERESAEPEELIEPFLTRFVGKVQGKNDRLSIVPDHPLLKDAIPCRAARGVQHEFKEGDWAVAEMRRHPLKGDRSFYADLTQYITFADDHFVPWWVTLARHNLEKEAPNGVATEMLDEGLERQDLTALNFVTIDSASTEDMDDALYAEELADGRLQLTVAIADPTAWIAEGSKLDNAAKIRAFTNYLPGFNIPMLPRELSDDLCSLRANEVRPALACRMIIAADGTIDDDIAFFAATIESKAKLVYDNVSDWLENNSTWQPENEGIAQQIRLLHRICLSRSEWRHHHALVFKDRPDYRFVLGEKGEVLDIVAEPRRIANRIVEESMIAANLCAARVLRDKLGFGIYNVHTGFDPANADALAALLKTHGLHVDAEEVLTLEGFCKLRRELDAQPSGFLDSRIRRFQSFAEISTEPGPHFGLGLEAYATWTSPIRKYGDMINHRLLKAVIKGEAIARPQEDITQQMAERRRLNRMAERDVGDWLYARFLNDKAGTNTRFAAEIIDVSRGGMRVRLVDNGAIAFIPAPFLHAVRDELVCSQENGTVQIKGETVYKVTDVIDVTIAEVRMETRSIIARPAA</sequence>
<dbReference type="EC" id="3.1.13.1" evidence="2"/>
<dbReference type="EMBL" id="AL513382">
    <property type="protein sequence ID" value="CAD01619.1"/>
    <property type="molecule type" value="Genomic_DNA"/>
</dbReference>
<dbReference type="EMBL" id="AE014613">
    <property type="protein sequence ID" value="AAO69242.1"/>
    <property type="molecule type" value="Genomic_DNA"/>
</dbReference>
<dbReference type="RefSeq" id="NP_455795.1">
    <property type="nucleotide sequence ID" value="NC_003198.1"/>
</dbReference>
<dbReference type="RefSeq" id="WP_000485046.1">
    <property type="nucleotide sequence ID" value="NZ_WSUR01000006.1"/>
</dbReference>
<dbReference type="SMR" id="Q8Z7C9"/>
<dbReference type="STRING" id="220341.gene:17585309"/>
<dbReference type="KEGG" id="stt:t1615"/>
<dbReference type="KEGG" id="sty:STY1350"/>
<dbReference type="PATRIC" id="fig|220341.7.peg.1359"/>
<dbReference type="eggNOG" id="COG4776">
    <property type="taxonomic scope" value="Bacteria"/>
</dbReference>
<dbReference type="HOGENOM" id="CLU_002333_7_3_6"/>
<dbReference type="OMA" id="MVNHRLI"/>
<dbReference type="OrthoDB" id="9764149at2"/>
<dbReference type="Proteomes" id="UP000000541">
    <property type="component" value="Chromosome"/>
</dbReference>
<dbReference type="Proteomes" id="UP000002670">
    <property type="component" value="Chromosome"/>
</dbReference>
<dbReference type="GO" id="GO:0005829">
    <property type="term" value="C:cytosol"/>
    <property type="evidence" value="ECO:0007669"/>
    <property type="project" value="UniProtKB-ARBA"/>
</dbReference>
<dbReference type="GO" id="GO:0008859">
    <property type="term" value="F:exoribonuclease II activity"/>
    <property type="evidence" value="ECO:0007669"/>
    <property type="project" value="UniProtKB-UniRule"/>
</dbReference>
<dbReference type="GO" id="GO:0003723">
    <property type="term" value="F:RNA binding"/>
    <property type="evidence" value="ECO:0007669"/>
    <property type="project" value="UniProtKB-KW"/>
</dbReference>
<dbReference type="GO" id="GO:0006402">
    <property type="term" value="P:mRNA catabolic process"/>
    <property type="evidence" value="ECO:0007669"/>
    <property type="project" value="UniProtKB-UniRule"/>
</dbReference>
<dbReference type="FunFam" id="2.40.50.140:FF:000079">
    <property type="entry name" value="Exoribonuclease 2"/>
    <property type="match status" value="1"/>
</dbReference>
<dbReference type="FunFam" id="2.40.50.140:FF:000081">
    <property type="entry name" value="Exoribonuclease 2"/>
    <property type="match status" value="1"/>
</dbReference>
<dbReference type="FunFam" id="2.40.50.640:FF:000001">
    <property type="entry name" value="Exoribonuclease 2"/>
    <property type="match status" value="1"/>
</dbReference>
<dbReference type="Gene3D" id="2.40.50.640">
    <property type="match status" value="1"/>
</dbReference>
<dbReference type="Gene3D" id="2.40.50.140">
    <property type="entry name" value="Nucleic acid-binding proteins"/>
    <property type="match status" value="2"/>
</dbReference>
<dbReference type="HAMAP" id="MF_01036">
    <property type="entry name" value="RNase_II"/>
    <property type="match status" value="1"/>
</dbReference>
<dbReference type="InterPro" id="IPR011129">
    <property type="entry name" value="CSD"/>
</dbReference>
<dbReference type="InterPro" id="IPR012340">
    <property type="entry name" value="NA-bd_OB-fold"/>
</dbReference>
<dbReference type="InterPro" id="IPR013223">
    <property type="entry name" value="RNase_B_OB_dom"/>
</dbReference>
<dbReference type="InterPro" id="IPR011804">
    <property type="entry name" value="RNase_II"/>
</dbReference>
<dbReference type="InterPro" id="IPR001900">
    <property type="entry name" value="RNase_II/R"/>
</dbReference>
<dbReference type="InterPro" id="IPR022966">
    <property type="entry name" value="RNase_II/R_CS"/>
</dbReference>
<dbReference type="InterPro" id="IPR004476">
    <property type="entry name" value="RNase_II/RNase_R"/>
</dbReference>
<dbReference type="InterPro" id="IPR050180">
    <property type="entry name" value="RNR_Ribonuclease"/>
</dbReference>
<dbReference type="InterPro" id="IPR003029">
    <property type="entry name" value="S1_domain"/>
</dbReference>
<dbReference type="NCBIfam" id="TIGR00358">
    <property type="entry name" value="3_prime_RNase"/>
    <property type="match status" value="1"/>
</dbReference>
<dbReference type="NCBIfam" id="NF003455">
    <property type="entry name" value="PRK05054.1"/>
    <property type="match status" value="1"/>
</dbReference>
<dbReference type="NCBIfam" id="TIGR02062">
    <property type="entry name" value="RNase_B"/>
    <property type="match status" value="1"/>
</dbReference>
<dbReference type="PANTHER" id="PTHR23355:SF37">
    <property type="entry name" value="EXORIBONUCLEASE 2"/>
    <property type="match status" value="1"/>
</dbReference>
<dbReference type="PANTHER" id="PTHR23355">
    <property type="entry name" value="RIBONUCLEASE"/>
    <property type="match status" value="1"/>
</dbReference>
<dbReference type="Pfam" id="PF08206">
    <property type="entry name" value="OB_RNB"/>
    <property type="match status" value="1"/>
</dbReference>
<dbReference type="Pfam" id="PF00773">
    <property type="entry name" value="RNB"/>
    <property type="match status" value="1"/>
</dbReference>
<dbReference type="Pfam" id="PF00575">
    <property type="entry name" value="S1"/>
    <property type="match status" value="1"/>
</dbReference>
<dbReference type="SMART" id="SM00357">
    <property type="entry name" value="CSP"/>
    <property type="match status" value="1"/>
</dbReference>
<dbReference type="SMART" id="SM00955">
    <property type="entry name" value="RNB"/>
    <property type="match status" value="1"/>
</dbReference>
<dbReference type="SUPFAM" id="SSF50249">
    <property type="entry name" value="Nucleic acid-binding proteins"/>
    <property type="match status" value="4"/>
</dbReference>
<dbReference type="PROSITE" id="PS01175">
    <property type="entry name" value="RIBONUCLEASE_II"/>
    <property type="match status" value="1"/>
</dbReference>
<evidence type="ECO:0000255" key="1"/>
<evidence type="ECO:0000255" key="2">
    <source>
        <dbReference type="HAMAP-Rule" id="MF_01036"/>
    </source>
</evidence>
<keyword id="KW-0963">Cytoplasm</keyword>
<keyword id="KW-0269">Exonuclease</keyword>
<keyword id="KW-0378">Hydrolase</keyword>
<keyword id="KW-0540">Nuclease</keyword>
<keyword id="KW-0694">RNA-binding</keyword>
<accession>Q8Z7C9</accession>
<proteinExistence type="inferred from homology"/>
<organism>
    <name type="scientific">Salmonella typhi</name>
    <dbReference type="NCBI Taxonomy" id="90370"/>
    <lineage>
        <taxon>Bacteria</taxon>
        <taxon>Pseudomonadati</taxon>
        <taxon>Pseudomonadota</taxon>
        <taxon>Gammaproteobacteria</taxon>
        <taxon>Enterobacterales</taxon>
        <taxon>Enterobacteriaceae</taxon>
        <taxon>Salmonella</taxon>
    </lineage>
</organism>
<feature type="chain" id="PRO_0000166387" description="Exoribonuclease 2">
    <location>
        <begin position="1"/>
        <end position="644"/>
    </location>
</feature>
<feature type="domain" description="RNB" evidence="1">
    <location>
        <begin position="189"/>
        <end position="516"/>
    </location>
</feature>
<feature type="domain" description="S1 motif" evidence="2">
    <location>
        <begin position="561"/>
        <end position="643"/>
    </location>
</feature>
<comment type="function">
    <text evidence="2">Involved in mRNA degradation. Hydrolyzes single-stranded polyribonucleotides processively in the 3' to 5' direction.</text>
</comment>
<comment type="catalytic activity">
    <reaction evidence="2">
        <text>Exonucleolytic cleavage in the 3'- to 5'-direction to yield nucleoside 5'-phosphates.</text>
        <dbReference type="EC" id="3.1.13.1"/>
    </reaction>
</comment>
<comment type="subcellular location">
    <subcellularLocation>
        <location evidence="2">Cytoplasm</location>
    </subcellularLocation>
</comment>
<comment type="similarity">
    <text evidence="2">Belongs to the RNR ribonuclease family. RNase II subfamily.</text>
</comment>